<accession>C4Z417</accession>
<proteinExistence type="inferred from homology"/>
<comment type="function">
    <text evidence="1">Endonuclease that is involved in the suppression of homologous recombination and thus may have a key role in the control of bacterial genetic diversity.</text>
</comment>
<comment type="function">
    <text evidence="1">Acts as a ribosome collision sensor, splitting the ribosome into its 2 subunits. Detects stalled/collided 70S ribosomes which it binds and splits by an ATP-hydrolysis driven conformational change. Acts upstream of the ribosome quality control system (RQC), a ribosome-associated complex that mediates the extraction of incompletely synthesized nascent chains from stalled ribosomes and their subsequent degradation. Probably generates substrates for RQC.</text>
</comment>
<comment type="subunit">
    <text evidence="1">Homodimer. Binds to stalled ribosomes, contacting rRNA.</text>
</comment>
<comment type="similarity">
    <text evidence="1">Belongs to the DNA mismatch repair MutS family. MutS2 subfamily.</text>
</comment>
<keyword id="KW-0067">ATP-binding</keyword>
<keyword id="KW-0238">DNA-binding</keyword>
<keyword id="KW-0255">Endonuclease</keyword>
<keyword id="KW-0378">Hydrolase</keyword>
<keyword id="KW-0540">Nuclease</keyword>
<keyword id="KW-0547">Nucleotide-binding</keyword>
<keyword id="KW-1185">Reference proteome</keyword>
<keyword id="KW-0694">RNA-binding</keyword>
<keyword id="KW-0699">rRNA-binding</keyword>
<name>MUTS2_LACE2</name>
<feature type="chain" id="PRO_1000202679" description="Endonuclease MutS2">
    <location>
        <begin position="1"/>
        <end position="787"/>
    </location>
</feature>
<feature type="domain" description="Smr" evidence="1">
    <location>
        <begin position="712"/>
        <end position="787"/>
    </location>
</feature>
<feature type="binding site" evidence="1">
    <location>
        <begin position="329"/>
        <end position="336"/>
    </location>
    <ligand>
        <name>ATP</name>
        <dbReference type="ChEBI" id="CHEBI:30616"/>
    </ligand>
</feature>
<sequence length="787" mass="86628">MNKKSLSTLEFYKITDQLVSYACCDGAKKILRNLKPMTDITDINLRLNETNDALSRIFQKGTVDFSQTKDIRASVARLKVGSSLNISELLNISAILSCAKHVKDYYEHREDSISGMLENLATVDALNSQIKKCIISEDEISDDASSNLRSIRRSKSIANDRIHSELNKLLNSPTYRTYLQDYVITTRQGRYCLPVKAEYKSAFPGMIHDQSSTGSTLFIEPAAVVKLNNDIRELELKEAAEIEVILADLSAKAGEHTEELLCDYEILVELDCIFAKAQLARHMHASRPVMNTSGIINIKKGRHPLIESHTVVPIDIYLGTDFKLLIITGPNTGGKTVSLKTVGLLTLMAQSGLFIPALDHSDIAVFKNIYADIGDEQSIEQSLSTFSSHMTNTVKILKEADENCLVLFDEIGAGTDPTEGAALAIAILNDLKMRGVTTMATTHYSEIKLYALSTEGVENASCEFDVESLRPTYRLLIGIPGKSNAFAISKKLGLPDYILSDASERLNAEDVHFEDIVSDLEHARISLEKEQAEVESYKAEIASLKEKLQAKNERLDERTDNIIRKANEQAAAILKDAKDFADETIKAMNKHGMTVAELEKHRTAVREKMNKNQAKLKVEPAKVKAHKAHDISEFKTGMHVKVLTMNVSGTVSAIHPAKKQVTVQVGALSTKIDIKNLEILSDYKEPKEAPSKAAGGSGKIKMSKSAGISTEINLLGCTVDEAVARLDKYLDDAYIARIPQVRIVHGKGTGALRNGVTAYLRGVPYIKSFRLGEIGEGDAGVTIVDFK</sequence>
<dbReference type="EC" id="3.1.-.-" evidence="1"/>
<dbReference type="EC" id="3.6.4.-" evidence="1"/>
<dbReference type="EMBL" id="CP001104">
    <property type="protein sequence ID" value="ACR72842.1"/>
    <property type="molecule type" value="Genomic_DNA"/>
</dbReference>
<dbReference type="RefSeq" id="WP_012740074.1">
    <property type="nucleotide sequence ID" value="NC_012778.1"/>
</dbReference>
<dbReference type="SMR" id="C4Z417"/>
<dbReference type="STRING" id="515620.EUBELI_01853"/>
<dbReference type="GeneID" id="41356503"/>
<dbReference type="KEGG" id="eel:EUBELI_01853"/>
<dbReference type="eggNOG" id="COG1193">
    <property type="taxonomic scope" value="Bacteria"/>
</dbReference>
<dbReference type="HOGENOM" id="CLU_011252_2_1_9"/>
<dbReference type="Proteomes" id="UP000001476">
    <property type="component" value="Chromosome"/>
</dbReference>
<dbReference type="GO" id="GO:0005524">
    <property type="term" value="F:ATP binding"/>
    <property type="evidence" value="ECO:0007669"/>
    <property type="project" value="UniProtKB-UniRule"/>
</dbReference>
<dbReference type="GO" id="GO:0016887">
    <property type="term" value="F:ATP hydrolysis activity"/>
    <property type="evidence" value="ECO:0007669"/>
    <property type="project" value="InterPro"/>
</dbReference>
<dbReference type="GO" id="GO:0140664">
    <property type="term" value="F:ATP-dependent DNA damage sensor activity"/>
    <property type="evidence" value="ECO:0007669"/>
    <property type="project" value="InterPro"/>
</dbReference>
<dbReference type="GO" id="GO:0004519">
    <property type="term" value="F:endonuclease activity"/>
    <property type="evidence" value="ECO:0007669"/>
    <property type="project" value="UniProtKB-UniRule"/>
</dbReference>
<dbReference type="GO" id="GO:0030983">
    <property type="term" value="F:mismatched DNA binding"/>
    <property type="evidence" value="ECO:0007669"/>
    <property type="project" value="InterPro"/>
</dbReference>
<dbReference type="GO" id="GO:0043023">
    <property type="term" value="F:ribosomal large subunit binding"/>
    <property type="evidence" value="ECO:0007669"/>
    <property type="project" value="UniProtKB-UniRule"/>
</dbReference>
<dbReference type="GO" id="GO:0019843">
    <property type="term" value="F:rRNA binding"/>
    <property type="evidence" value="ECO:0007669"/>
    <property type="project" value="UniProtKB-UniRule"/>
</dbReference>
<dbReference type="GO" id="GO:0006298">
    <property type="term" value="P:mismatch repair"/>
    <property type="evidence" value="ECO:0007669"/>
    <property type="project" value="InterPro"/>
</dbReference>
<dbReference type="GO" id="GO:0045910">
    <property type="term" value="P:negative regulation of DNA recombination"/>
    <property type="evidence" value="ECO:0007669"/>
    <property type="project" value="InterPro"/>
</dbReference>
<dbReference type="GO" id="GO:0072344">
    <property type="term" value="P:rescue of stalled ribosome"/>
    <property type="evidence" value="ECO:0007669"/>
    <property type="project" value="UniProtKB-UniRule"/>
</dbReference>
<dbReference type="CDD" id="cd03280">
    <property type="entry name" value="ABC_MutS2"/>
    <property type="match status" value="1"/>
</dbReference>
<dbReference type="FunFam" id="3.40.50.300:FF:000830">
    <property type="entry name" value="Endonuclease MutS2"/>
    <property type="match status" value="1"/>
</dbReference>
<dbReference type="Gene3D" id="3.30.1370.110">
    <property type="match status" value="1"/>
</dbReference>
<dbReference type="Gene3D" id="3.40.50.300">
    <property type="entry name" value="P-loop containing nucleotide triphosphate hydrolases"/>
    <property type="match status" value="1"/>
</dbReference>
<dbReference type="HAMAP" id="MF_00092">
    <property type="entry name" value="MutS2"/>
    <property type="match status" value="1"/>
</dbReference>
<dbReference type="InterPro" id="IPR000432">
    <property type="entry name" value="DNA_mismatch_repair_MutS_C"/>
</dbReference>
<dbReference type="InterPro" id="IPR007696">
    <property type="entry name" value="DNA_mismatch_repair_MutS_core"/>
</dbReference>
<dbReference type="InterPro" id="IPR036187">
    <property type="entry name" value="DNA_mismatch_repair_MutS_sf"/>
</dbReference>
<dbReference type="InterPro" id="IPR046893">
    <property type="entry name" value="MSSS"/>
</dbReference>
<dbReference type="InterPro" id="IPR045076">
    <property type="entry name" value="MutS"/>
</dbReference>
<dbReference type="InterPro" id="IPR005747">
    <property type="entry name" value="MutS2"/>
</dbReference>
<dbReference type="InterPro" id="IPR027417">
    <property type="entry name" value="P-loop_NTPase"/>
</dbReference>
<dbReference type="InterPro" id="IPR002625">
    <property type="entry name" value="Smr_dom"/>
</dbReference>
<dbReference type="InterPro" id="IPR036063">
    <property type="entry name" value="Smr_dom_sf"/>
</dbReference>
<dbReference type="NCBIfam" id="TIGR01069">
    <property type="entry name" value="mutS2"/>
    <property type="match status" value="1"/>
</dbReference>
<dbReference type="PANTHER" id="PTHR48466:SF2">
    <property type="entry name" value="OS10G0509000 PROTEIN"/>
    <property type="match status" value="1"/>
</dbReference>
<dbReference type="PANTHER" id="PTHR48466">
    <property type="entry name" value="OS10G0509000 PROTEIN-RELATED"/>
    <property type="match status" value="1"/>
</dbReference>
<dbReference type="Pfam" id="PF20297">
    <property type="entry name" value="MSSS"/>
    <property type="match status" value="1"/>
</dbReference>
<dbReference type="Pfam" id="PF00488">
    <property type="entry name" value="MutS_V"/>
    <property type="match status" value="1"/>
</dbReference>
<dbReference type="Pfam" id="PF01713">
    <property type="entry name" value="Smr"/>
    <property type="match status" value="1"/>
</dbReference>
<dbReference type="PIRSF" id="PIRSF005814">
    <property type="entry name" value="MutS_YshD"/>
    <property type="match status" value="1"/>
</dbReference>
<dbReference type="SMART" id="SM00534">
    <property type="entry name" value="MUTSac"/>
    <property type="match status" value="1"/>
</dbReference>
<dbReference type="SMART" id="SM00533">
    <property type="entry name" value="MUTSd"/>
    <property type="match status" value="1"/>
</dbReference>
<dbReference type="SMART" id="SM00463">
    <property type="entry name" value="SMR"/>
    <property type="match status" value="1"/>
</dbReference>
<dbReference type="SUPFAM" id="SSF48334">
    <property type="entry name" value="DNA repair protein MutS, domain III"/>
    <property type="match status" value="1"/>
</dbReference>
<dbReference type="SUPFAM" id="SSF52540">
    <property type="entry name" value="P-loop containing nucleoside triphosphate hydrolases"/>
    <property type="match status" value="1"/>
</dbReference>
<dbReference type="SUPFAM" id="SSF160443">
    <property type="entry name" value="SMR domain-like"/>
    <property type="match status" value="1"/>
</dbReference>
<dbReference type="PROSITE" id="PS50828">
    <property type="entry name" value="SMR"/>
    <property type="match status" value="1"/>
</dbReference>
<protein>
    <recommendedName>
        <fullName evidence="1">Endonuclease MutS2</fullName>
        <ecNumber evidence="1">3.1.-.-</ecNumber>
    </recommendedName>
    <alternativeName>
        <fullName evidence="1">Ribosome-associated protein quality control-upstream factor</fullName>
        <shortName evidence="1">RQC-upstream factor</shortName>
        <shortName evidence="1">RqcU</shortName>
        <ecNumber evidence="1">3.6.4.-</ecNumber>
    </alternativeName>
</protein>
<evidence type="ECO:0000255" key="1">
    <source>
        <dbReference type="HAMAP-Rule" id="MF_00092"/>
    </source>
</evidence>
<gene>
    <name evidence="1" type="primary">mutS2</name>
    <name evidence="1" type="synonym">rqcU</name>
    <name type="ordered locus">EUBELI_01853</name>
</gene>
<organism>
    <name type="scientific">Lachnospira eligens (strain ATCC 27750 / DSM 3376 / VPI C15-48 / C15-B4)</name>
    <name type="common">Eubacterium eligens</name>
    <dbReference type="NCBI Taxonomy" id="515620"/>
    <lineage>
        <taxon>Bacteria</taxon>
        <taxon>Bacillati</taxon>
        <taxon>Bacillota</taxon>
        <taxon>Clostridia</taxon>
        <taxon>Lachnospirales</taxon>
        <taxon>Lachnospiraceae</taxon>
        <taxon>Lachnospira</taxon>
    </lineage>
</organism>
<reference key="1">
    <citation type="journal article" date="2009" name="Proc. Natl. Acad. Sci. U.S.A.">
        <title>Characterizing a model human gut microbiota composed of members of its two dominant bacterial phyla.</title>
        <authorList>
            <person name="Mahowald M.A."/>
            <person name="Rey F.E."/>
            <person name="Seedorf H."/>
            <person name="Turnbaugh P.J."/>
            <person name="Fulton R.S."/>
            <person name="Wollam A."/>
            <person name="Shah N."/>
            <person name="Wang C."/>
            <person name="Magrini V."/>
            <person name="Wilson R.K."/>
            <person name="Cantarel B.L."/>
            <person name="Coutinho P.M."/>
            <person name="Henrissat B."/>
            <person name="Crock L.W."/>
            <person name="Russell A."/>
            <person name="Verberkmoes N.C."/>
            <person name="Hettich R.L."/>
            <person name="Gordon J.I."/>
        </authorList>
    </citation>
    <scope>NUCLEOTIDE SEQUENCE [LARGE SCALE GENOMIC DNA]</scope>
    <source>
        <strain>ATCC 27750 / DSM 3376 / VPI C15-48 / C15-B4</strain>
    </source>
</reference>